<protein>
    <recommendedName>
        <fullName>Protein zntB</fullName>
    </recommendedName>
</protein>
<name>ZNTB_DICDI</name>
<comment type="function">
    <text evidence="1 4">May transport divalent cations (By similarity). May participate, with dstA, in the regulation of the differentiation of stalk cells during development.</text>
</comment>
<comment type="subcellular location">
    <subcellularLocation>
        <location evidence="5">Membrane</location>
        <topology evidence="5">Multi-pass membrane protein</topology>
    </subcellularLocation>
</comment>
<comment type="developmental stage">
    <text evidence="4">Expressed in the prestalk cells type pstAB, this expression being absent in the dstA null mutant.</text>
</comment>
<comment type="similarity">
    <text evidence="5">Belongs to the ZIP transporter (TC 2.A.5) family. ZupT subfamily.</text>
</comment>
<gene>
    <name type="primary">zntB</name>
    <name type="ORF">DDB_G0286345</name>
</gene>
<evidence type="ECO:0000250" key="1"/>
<evidence type="ECO:0000255" key="2"/>
<evidence type="ECO:0000256" key="3">
    <source>
        <dbReference type="SAM" id="MobiDB-lite"/>
    </source>
</evidence>
<evidence type="ECO:0000269" key="4">
    <source>
    </source>
</evidence>
<evidence type="ECO:0000305" key="5"/>
<sequence>MTSLETYNDNVKTALIMCFLSGLSTAIGGLYVIFIKQQSHKLLGHLLSFSSGVMIYISFMDLLPESIAEIGFYNANIWFFVGIIFFAVILRFVPHDHDESGDSNHAHSHNGASIEKHSSEKKEVVDDDDDDNNGKDKKQKQQKQKQQKQQQQQKQNIAKSKNKKKSKDDYLNSVGIATAIGVSLHNFPEGVAVYLACLKGIDVGLPLMLAIAAHNIPEGMAVAAPIFSATGSKWKAFKYCLYSGLCEPVGAIIFGLIFKEYMTPYLIQSMLAAVAGIMVFMVIKELLPAAFKYVSVDESAFSNIIGMIFFFFSIHFLHSMLPHDHGGAGDGGHGHSHGGHGHSHGHGHSHGGHSHDSQHVESPQSSSFNAFA</sequence>
<keyword id="KW-0175">Coiled coil</keyword>
<keyword id="KW-0406">Ion transport</keyword>
<keyword id="KW-0472">Membrane</keyword>
<keyword id="KW-1185">Reference proteome</keyword>
<keyword id="KW-0812">Transmembrane</keyword>
<keyword id="KW-1133">Transmembrane helix</keyword>
<keyword id="KW-0813">Transport</keyword>
<accession>Q54LY6</accession>
<dbReference type="EMBL" id="AAFI02000085">
    <property type="protein sequence ID" value="EAL64348.1"/>
    <property type="molecule type" value="Genomic_DNA"/>
</dbReference>
<dbReference type="RefSeq" id="XP_637845.1">
    <property type="nucleotide sequence ID" value="XM_632753.1"/>
</dbReference>
<dbReference type="SMR" id="Q54LY6"/>
<dbReference type="FunCoup" id="Q54LY6">
    <property type="interactions" value="39"/>
</dbReference>
<dbReference type="STRING" id="44689.Q54LY6"/>
<dbReference type="PaxDb" id="44689-DDB0266635"/>
<dbReference type="EnsemblProtists" id="EAL64348">
    <property type="protein sequence ID" value="EAL64348"/>
    <property type="gene ID" value="DDB_G0286345"/>
</dbReference>
<dbReference type="GeneID" id="8625559"/>
<dbReference type="KEGG" id="ddi:DDB_G0286345"/>
<dbReference type="dictyBase" id="DDB_G0286345">
    <property type="gene designation" value="zplF"/>
</dbReference>
<dbReference type="VEuPathDB" id="AmoebaDB:DDB_G0286345"/>
<dbReference type="eggNOG" id="KOG2474">
    <property type="taxonomic scope" value="Eukaryota"/>
</dbReference>
<dbReference type="HOGENOM" id="CLU_015114_3_1_1"/>
<dbReference type="InParanoid" id="Q54LY6"/>
<dbReference type="OMA" id="AGIMVFM"/>
<dbReference type="PhylomeDB" id="Q54LY6"/>
<dbReference type="PRO" id="PR:Q54LY6"/>
<dbReference type="Proteomes" id="UP000002195">
    <property type="component" value="Chromosome 4"/>
</dbReference>
<dbReference type="GO" id="GO:0016020">
    <property type="term" value="C:membrane"/>
    <property type="evidence" value="ECO:0000318"/>
    <property type="project" value="GO_Central"/>
</dbReference>
<dbReference type="GO" id="GO:0005385">
    <property type="term" value="F:zinc ion transmembrane transporter activity"/>
    <property type="evidence" value="ECO:0000318"/>
    <property type="project" value="GO_Central"/>
</dbReference>
<dbReference type="GO" id="GO:0071577">
    <property type="term" value="P:zinc ion transmembrane transport"/>
    <property type="evidence" value="ECO:0000318"/>
    <property type="project" value="GO_Central"/>
</dbReference>
<dbReference type="InterPro" id="IPR003689">
    <property type="entry name" value="ZIP"/>
</dbReference>
<dbReference type="PANTHER" id="PTHR11040:SF210">
    <property type="entry name" value="ZINC-REGULATED TRANSPORTER 3"/>
    <property type="match status" value="1"/>
</dbReference>
<dbReference type="PANTHER" id="PTHR11040">
    <property type="entry name" value="ZINC/IRON TRANSPORTER"/>
    <property type="match status" value="1"/>
</dbReference>
<dbReference type="Pfam" id="PF02535">
    <property type="entry name" value="Zip"/>
    <property type="match status" value="1"/>
</dbReference>
<proteinExistence type="evidence at transcript level"/>
<reference key="1">
    <citation type="journal article" date="2005" name="Nature">
        <title>The genome of the social amoeba Dictyostelium discoideum.</title>
        <authorList>
            <person name="Eichinger L."/>
            <person name="Pachebat J.A."/>
            <person name="Gloeckner G."/>
            <person name="Rajandream M.A."/>
            <person name="Sucgang R."/>
            <person name="Berriman M."/>
            <person name="Song J."/>
            <person name="Olsen R."/>
            <person name="Szafranski K."/>
            <person name="Xu Q."/>
            <person name="Tunggal B."/>
            <person name="Kummerfeld S."/>
            <person name="Madera M."/>
            <person name="Konfortov B.A."/>
            <person name="Rivero F."/>
            <person name="Bankier A.T."/>
            <person name="Lehmann R."/>
            <person name="Hamlin N."/>
            <person name="Davies R."/>
            <person name="Gaudet P."/>
            <person name="Fey P."/>
            <person name="Pilcher K."/>
            <person name="Chen G."/>
            <person name="Saunders D."/>
            <person name="Sodergren E.J."/>
            <person name="Davis P."/>
            <person name="Kerhornou A."/>
            <person name="Nie X."/>
            <person name="Hall N."/>
            <person name="Anjard C."/>
            <person name="Hemphill L."/>
            <person name="Bason N."/>
            <person name="Farbrother P."/>
            <person name="Desany B."/>
            <person name="Just E."/>
            <person name="Morio T."/>
            <person name="Rost R."/>
            <person name="Churcher C.M."/>
            <person name="Cooper J."/>
            <person name="Haydock S."/>
            <person name="van Driessche N."/>
            <person name="Cronin A."/>
            <person name="Goodhead I."/>
            <person name="Muzny D.M."/>
            <person name="Mourier T."/>
            <person name="Pain A."/>
            <person name="Lu M."/>
            <person name="Harper D."/>
            <person name="Lindsay R."/>
            <person name="Hauser H."/>
            <person name="James K.D."/>
            <person name="Quiles M."/>
            <person name="Madan Babu M."/>
            <person name="Saito T."/>
            <person name="Buchrieser C."/>
            <person name="Wardroper A."/>
            <person name="Felder M."/>
            <person name="Thangavelu M."/>
            <person name="Johnson D."/>
            <person name="Knights A."/>
            <person name="Loulseged H."/>
            <person name="Mungall K.L."/>
            <person name="Oliver K."/>
            <person name="Price C."/>
            <person name="Quail M.A."/>
            <person name="Urushihara H."/>
            <person name="Hernandez J."/>
            <person name="Rabbinowitsch E."/>
            <person name="Steffen D."/>
            <person name="Sanders M."/>
            <person name="Ma J."/>
            <person name="Kohara Y."/>
            <person name="Sharp S."/>
            <person name="Simmonds M.N."/>
            <person name="Spiegler S."/>
            <person name="Tivey A."/>
            <person name="Sugano S."/>
            <person name="White B."/>
            <person name="Walker D."/>
            <person name="Woodward J.R."/>
            <person name="Winckler T."/>
            <person name="Tanaka Y."/>
            <person name="Shaulsky G."/>
            <person name="Schleicher M."/>
            <person name="Weinstock G.M."/>
            <person name="Rosenthal A."/>
            <person name="Cox E.C."/>
            <person name="Chisholm R.L."/>
            <person name="Gibbs R.A."/>
            <person name="Loomis W.F."/>
            <person name="Platzer M."/>
            <person name="Kay R.R."/>
            <person name="Williams J.G."/>
            <person name="Dear P.H."/>
            <person name="Noegel A.A."/>
            <person name="Barrell B.G."/>
            <person name="Kuspa A."/>
        </authorList>
    </citation>
    <scope>NUCLEOTIDE SEQUENCE [LARGE SCALE GENOMIC DNA]</scope>
    <source>
        <strain>AX4</strain>
    </source>
</reference>
<reference key="2">
    <citation type="journal article" date="2008" name="Int. J. Dev. Biol.">
        <title>Expression of zinc transporter family genes in Dictyostelium.</title>
        <authorList>
            <person name="Sunaga N."/>
            <person name="Monna M."/>
            <person name="Shimada N."/>
            <person name="Tsukamoto M."/>
            <person name="Kawata T."/>
        </authorList>
    </citation>
    <scope>DEVELOPMENTAL STAGE</scope>
    <scope>FUNCTION</scope>
    <source>
        <strain>AX2</strain>
    </source>
</reference>
<feature type="chain" id="PRO_0000386637" description="Protein zntB">
    <location>
        <begin position="1"/>
        <end position="372"/>
    </location>
</feature>
<feature type="transmembrane region" description="Helical" evidence="2">
    <location>
        <begin position="15"/>
        <end position="35"/>
    </location>
</feature>
<feature type="transmembrane region" description="Helical" evidence="2">
    <location>
        <begin position="42"/>
        <end position="62"/>
    </location>
</feature>
<feature type="transmembrane region" description="Helical" evidence="2">
    <location>
        <begin position="70"/>
        <end position="90"/>
    </location>
</feature>
<feature type="transmembrane region" description="Helical" evidence="2">
    <location>
        <begin position="170"/>
        <end position="192"/>
    </location>
</feature>
<feature type="transmembrane region" description="Helical" evidence="2">
    <location>
        <begin position="207"/>
        <end position="229"/>
    </location>
</feature>
<feature type="transmembrane region" description="Helical" evidence="2">
    <location>
        <begin position="237"/>
        <end position="257"/>
    </location>
</feature>
<feature type="transmembrane region" description="Helical" evidence="2">
    <location>
        <begin position="271"/>
        <end position="291"/>
    </location>
</feature>
<feature type="transmembrane region" description="Helical" evidence="2">
    <location>
        <begin position="301"/>
        <end position="321"/>
    </location>
</feature>
<feature type="region of interest" description="Disordered" evidence="3">
    <location>
        <begin position="99"/>
        <end position="166"/>
    </location>
</feature>
<feature type="region of interest" description="Disordered" evidence="3">
    <location>
        <begin position="328"/>
        <end position="372"/>
    </location>
</feature>
<feature type="coiled-coil region" evidence="2">
    <location>
        <begin position="133"/>
        <end position="167"/>
    </location>
</feature>
<feature type="compositionally biased region" description="Basic and acidic residues" evidence="3">
    <location>
        <begin position="114"/>
        <end position="124"/>
    </location>
</feature>
<feature type="compositionally biased region" description="Basic residues" evidence="3">
    <location>
        <begin position="137"/>
        <end position="146"/>
    </location>
</feature>
<feature type="compositionally biased region" description="Low complexity" evidence="3">
    <location>
        <begin position="147"/>
        <end position="159"/>
    </location>
</feature>
<feature type="compositionally biased region" description="Basic residues" evidence="3">
    <location>
        <begin position="334"/>
        <end position="352"/>
    </location>
</feature>
<feature type="compositionally biased region" description="Polar residues" evidence="3">
    <location>
        <begin position="360"/>
        <end position="372"/>
    </location>
</feature>
<organism>
    <name type="scientific">Dictyostelium discoideum</name>
    <name type="common">Social amoeba</name>
    <dbReference type="NCBI Taxonomy" id="44689"/>
    <lineage>
        <taxon>Eukaryota</taxon>
        <taxon>Amoebozoa</taxon>
        <taxon>Evosea</taxon>
        <taxon>Eumycetozoa</taxon>
        <taxon>Dictyostelia</taxon>
        <taxon>Dictyosteliales</taxon>
        <taxon>Dictyosteliaceae</taxon>
        <taxon>Dictyostelium</taxon>
    </lineage>
</organism>